<gene>
    <name evidence="2" type="primary">rnb</name>
    <name type="ordered locus">VCM66_A0764</name>
</gene>
<proteinExistence type="inferred from homology"/>
<comment type="function">
    <text evidence="2">Involved in mRNA degradation. Hydrolyzes single-stranded polyribonucleotides processively in the 3' to 5' direction.</text>
</comment>
<comment type="catalytic activity">
    <reaction evidence="2">
        <text>Exonucleolytic cleavage in the 3'- to 5'-direction to yield nucleoside 5'-phosphates.</text>
        <dbReference type="EC" id="3.1.13.1"/>
    </reaction>
</comment>
<comment type="subcellular location">
    <subcellularLocation>
        <location evidence="2">Cytoplasm</location>
    </subcellularLocation>
</comment>
<comment type="similarity">
    <text evidence="2">Belongs to the RNR ribonuclease family. RNase II subfamily.</text>
</comment>
<evidence type="ECO:0000255" key="1"/>
<evidence type="ECO:0000255" key="2">
    <source>
        <dbReference type="HAMAP-Rule" id="MF_01036"/>
    </source>
</evidence>
<evidence type="ECO:0000256" key="3">
    <source>
        <dbReference type="SAM" id="MobiDB-lite"/>
    </source>
</evidence>
<accession>C3LW69</accession>
<feature type="chain" id="PRO_1000149460" description="Exoribonuclease 2">
    <location>
        <begin position="1"/>
        <end position="678"/>
    </location>
</feature>
<feature type="domain" description="RNB" evidence="1">
    <location>
        <begin position="193"/>
        <end position="521"/>
    </location>
</feature>
<feature type="domain" description="S1 motif" evidence="2">
    <location>
        <begin position="568"/>
        <end position="650"/>
    </location>
</feature>
<feature type="region of interest" description="Disordered" evidence="3">
    <location>
        <begin position="659"/>
        <end position="678"/>
    </location>
</feature>
<organism>
    <name type="scientific">Vibrio cholerae serotype O1 (strain M66-2)</name>
    <dbReference type="NCBI Taxonomy" id="579112"/>
    <lineage>
        <taxon>Bacteria</taxon>
        <taxon>Pseudomonadati</taxon>
        <taxon>Pseudomonadota</taxon>
        <taxon>Gammaproteobacteria</taxon>
        <taxon>Vibrionales</taxon>
        <taxon>Vibrionaceae</taxon>
        <taxon>Vibrio</taxon>
    </lineage>
</organism>
<keyword id="KW-0963">Cytoplasm</keyword>
<keyword id="KW-0269">Exonuclease</keyword>
<keyword id="KW-0378">Hydrolase</keyword>
<keyword id="KW-0540">Nuclease</keyword>
<keyword id="KW-0694">RNA-binding</keyword>
<name>RNB_VIBCM</name>
<sequence>MFQDNPLLAQLKQKIQETLPKKEGTIKASDKGFGFLEVDSKTSYFVPPPYMKKCMHGDKVVAFIRTENEREVAEPSELIEQSLTRFIGRVKLFKGKLNVAPDHPQLKKLSLKAKTKKGLNEADFQEGDWVVAHLVRHPLKGDDGFFVQISHKITDANDKIAPWWVTLAENDLPNSEPAGIDDWQLKDDADLVREDLTALPFVTIDGESTKDMDDALYAQQLPNGDFALTIAIADPTAYITPEDEMDKVARERGFTIYLPGRNIPMLPRDLADELCSLMENQVRPALCCSVTIRKDGVIGDDIRFFAANIKSHARLVYDHVSDWLETGSSEQWQPSEEIAQVVRDLYAFSQARANWRETHAVVFPDRPDYRFELSADNDVVAIHADMRRTANRLVEESMITANICAGKTLQTTFGFGVFNTHAGFKAEKMADVVELMAVNGAPNADAETLATVEGFAALRRWLATQETSYLDNRIRKYQSYSEIGNQPLPHFAMGLDVYATWTSPIRKYGDMINHRLLKAHILGKAPVQTPDETVGEELALHRKHHKIAERNVADWLYARTLADEPAKETRFQAEIFDINRPGMRVRLLENGAMAFIPGALILDNKERIECNGEDGTVLIDKEVVYKLGDVLEIVLTEVNQENRSLVGKPTQVFADLVSETQTSAEQPAEGAENNEPQV</sequence>
<reference key="1">
    <citation type="journal article" date="2008" name="PLoS ONE">
        <title>A recalibrated molecular clock and independent origins for the cholera pandemic clones.</title>
        <authorList>
            <person name="Feng L."/>
            <person name="Reeves P.R."/>
            <person name="Lan R."/>
            <person name="Ren Y."/>
            <person name="Gao C."/>
            <person name="Zhou Z."/>
            <person name="Ren Y."/>
            <person name="Cheng J."/>
            <person name="Wang W."/>
            <person name="Wang J."/>
            <person name="Qian W."/>
            <person name="Li D."/>
            <person name="Wang L."/>
        </authorList>
    </citation>
    <scope>NUCLEOTIDE SEQUENCE [LARGE SCALE GENOMIC DNA]</scope>
    <source>
        <strain>M66-2</strain>
    </source>
</reference>
<protein>
    <recommendedName>
        <fullName evidence="2">Exoribonuclease 2</fullName>
        <ecNumber evidence="2">3.1.13.1</ecNumber>
    </recommendedName>
    <alternativeName>
        <fullName evidence="2">Exoribonuclease II</fullName>
        <shortName evidence="2">RNase II</shortName>
        <shortName evidence="2">Ribonuclease II</shortName>
    </alternativeName>
</protein>
<dbReference type="EC" id="3.1.13.1" evidence="2"/>
<dbReference type="EMBL" id="CP001234">
    <property type="protein sequence ID" value="ACP07724.1"/>
    <property type="molecule type" value="Genomic_DNA"/>
</dbReference>
<dbReference type="RefSeq" id="WP_000484954.1">
    <property type="nucleotide sequence ID" value="NC_012580.1"/>
</dbReference>
<dbReference type="SMR" id="C3LW69"/>
<dbReference type="KEGG" id="vcm:VCM66_A0764"/>
<dbReference type="HOGENOM" id="CLU_002333_7_3_6"/>
<dbReference type="Proteomes" id="UP000001217">
    <property type="component" value="Chromosome II"/>
</dbReference>
<dbReference type="GO" id="GO:0005829">
    <property type="term" value="C:cytosol"/>
    <property type="evidence" value="ECO:0007669"/>
    <property type="project" value="UniProtKB-ARBA"/>
</dbReference>
<dbReference type="GO" id="GO:0008859">
    <property type="term" value="F:exoribonuclease II activity"/>
    <property type="evidence" value="ECO:0007669"/>
    <property type="project" value="UniProtKB-UniRule"/>
</dbReference>
<dbReference type="GO" id="GO:0003723">
    <property type="term" value="F:RNA binding"/>
    <property type="evidence" value="ECO:0007669"/>
    <property type="project" value="UniProtKB-KW"/>
</dbReference>
<dbReference type="GO" id="GO:0006402">
    <property type="term" value="P:mRNA catabolic process"/>
    <property type="evidence" value="ECO:0007669"/>
    <property type="project" value="UniProtKB-UniRule"/>
</dbReference>
<dbReference type="Gene3D" id="2.40.50.640">
    <property type="match status" value="1"/>
</dbReference>
<dbReference type="Gene3D" id="2.40.50.140">
    <property type="entry name" value="Nucleic acid-binding proteins"/>
    <property type="match status" value="2"/>
</dbReference>
<dbReference type="HAMAP" id="MF_01036">
    <property type="entry name" value="RNase_II"/>
    <property type="match status" value="1"/>
</dbReference>
<dbReference type="InterPro" id="IPR011129">
    <property type="entry name" value="CSD"/>
</dbReference>
<dbReference type="InterPro" id="IPR012340">
    <property type="entry name" value="NA-bd_OB-fold"/>
</dbReference>
<dbReference type="InterPro" id="IPR013223">
    <property type="entry name" value="RNase_B_OB_dom"/>
</dbReference>
<dbReference type="InterPro" id="IPR011804">
    <property type="entry name" value="RNase_II"/>
</dbReference>
<dbReference type="InterPro" id="IPR001900">
    <property type="entry name" value="RNase_II/R"/>
</dbReference>
<dbReference type="InterPro" id="IPR022966">
    <property type="entry name" value="RNase_II/R_CS"/>
</dbReference>
<dbReference type="InterPro" id="IPR004476">
    <property type="entry name" value="RNase_II/RNase_R"/>
</dbReference>
<dbReference type="InterPro" id="IPR050180">
    <property type="entry name" value="RNR_Ribonuclease"/>
</dbReference>
<dbReference type="InterPro" id="IPR003029">
    <property type="entry name" value="S1_domain"/>
</dbReference>
<dbReference type="NCBIfam" id="TIGR00358">
    <property type="entry name" value="3_prime_RNase"/>
    <property type="match status" value="1"/>
</dbReference>
<dbReference type="NCBIfam" id="NF003455">
    <property type="entry name" value="PRK05054.1"/>
    <property type="match status" value="1"/>
</dbReference>
<dbReference type="NCBIfam" id="TIGR02062">
    <property type="entry name" value="RNase_B"/>
    <property type="match status" value="1"/>
</dbReference>
<dbReference type="PANTHER" id="PTHR23355:SF37">
    <property type="entry name" value="EXORIBONUCLEASE 2"/>
    <property type="match status" value="1"/>
</dbReference>
<dbReference type="PANTHER" id="PTHR23355">
    <property type="entry name" value="RIBONUCLEASE"/>
    <property type="match status" value="1"/>
</dbReference>
<dbReference type="Pfam" id="PF08206">
    <property type="entry name" value="OB_RNB"/>
    <property type="match status" value="1"/>
</dbReference>
<dbReference type="Pfam" id="PF00773">
    <property type="entry name" value="RNB"/>
    <property type="match status" value="1"/>
</dbReference>
<dbReference type="Pfam" id="PF00575">
    <property type="entry name" value="S1"/>
    <property type="match status" value="1"/>
</dbReference>
<dbReference type="SMART" id="SM00357">
    <property type="entry name" value="CSP"/>
    <property type="match status" value="1"/>
</dbReference>
<dbReference type="SMART" id="SM00955">
    <property type="entry name" value="RNB"/>
    <property type="match status" value="1"/>
</dbReference>
<dbReference type="SUPFAM" id="SSF50249">
    <property type="entry name" value="Nucleic acid-binding proteins"/>
    <property type="match status" value="4"/>
</dbReference>
<dbReference type="PROSITE" id="PS01175">
    <property type="entry name" value="RIBONUCLEASE_II"/>
    <property type="match status" value="1"/>
</dbReference>